<accession>P04796</accession>
<organism>
    <name type="scientific">Sinapis alba</name>
    <name type="common">White mustard</name>
    <name type="synonym">Brassica hirta</name>
    <dbReference type="NCBI Taxonomy" id="3728"/>
    <lineage>
        <taxon>Eukaryota</taxon>
        <taxon>Viridiplantae</taxon>
        <taxon>Streptophyta</taxon>
        <taxon>Embryophyta</taxon>
        <taxon>Tracheophyta</taxon>
        <taxon>Spermatophyta</taxon>
        <taxon>Magnoliopsida</taxon>
        <taxon>eudicotyledons</taxon>
        <taxon>Gunneridae</taxon>
        <taxon>Pentapetalae</taxon>
        <taxon>rosids</taxon>
        <taxon>malvids</taxon>
        <taxon>Brassicales</taxon>
        <taxon>Brassicaceae</taxon>
        <taxon>Brassiceae</taxon>
        <taxon>Sinapis</taxon>
    </lineage>
</organism>
<feature type="chain" id="PRO_0000145618" description="Glyceraldehyde-3-phosphate dehydrogenase, cytosolic">
    <location>
        <begin position="1"/>
        <end position="338"/>
    </location>
</feature>
<feature type="region of interest" description="Binding to NAD">
    <location>
        <begin position="2"/>
        <end position="153"/>
    </location>
</feature>
<feature type="region of interest" description="External loop">
    <location>
        <begin position="56"/>
        <end position="75"/>
    </location>
</feature>
<feature type="region of interest" description="Catalytic">
    <location>
        <begin position="154"/>
        <end position="338"/>
    </location>
</feature>
<feature type="region of interest" description="S-loop">
    <location>
        <begin position="183"/>
        <end position="206"/>
    </location>
</feature>
<feature type="active site" description="Nucleophile" evidence="3">
    <location>
        <position position="156"/>
    </location>
</feature>
<feature type="binding site" evidence="1">
    <location>
        <begin position="15"/>
        <end position="16"/>
    </location>
    <ligand>
        <name>NAD(+)</name>
        <dbReference type="ChEBI" id="CHEBI:57540"/>
    </ligand>
</feature>
<feature type="binding site" evidence="1">
    <location>
        <position position="37"/>
    </location>
    <ligand>
        <name>NAD(+)</name>
        <dbReference type="ChEBI" id="CHEBI:57540"/>
    </ligand>
</feature>
<feature type="binding site" evidence="1">
    <location>
        <position position="84"/>
    </location>
    <ligand>
        <name>NAD(+)</name>
        <dbReference type="ChEBI" id="CHEBI:57540"/>
    </ligand>
</feature>
<feature type="binding site" evidence="1">
    <location>
        <begin position="155"/>
        <end position="157"/>
    </location>
    <ligand>
        <name>D-glyceraldehyde 3-phosphate</name>
        <dbReference type="ChEBI" id="CHEBI:59776"/>
    </ligand>
</feature>
<feature type="binding site" evidence="1">
    <location>
        <position position="186"/>
    </location>
    <ligand>
        <name>D-glyceraldehyde 3-phosphate</name>
        <dbReference type="ChEBI" id="CHEBI:59776"/>
    </ligand>
</feature>
<feature type="binding site" evidence="1">
    <location>
        <begin position="215"/>
        <end position="216"/>
    </location>
    <ligand>
        <name>D-glyceraldehyde 3-phosphate</name>
        <dbReference type="ChEBI" id="CHEBI:59776"/>
    </ligand>
</feature>
<feature type="binding site" evidence="1">
    <location>
        <position position="238"/>
    </location>
    <ligand>
        <name>D-glyceraldehyde 3-phosphate</name>
        <dbReference type="ChEBI" id="CHEBI:59776"/>
    </ligand>
</feature>
<feature type="binding site" evidence="1">
    <location>
        <position position="320"/>
    </location>
    <ligand>
        <name>NAD(+)</name>
        <dbReference type="ChEBI" id="CHEBI:57540"/>
    </ligand>
</feature>
<feature type="site" description="Activates thiol group during catalysis" evidence="1">
    <location>
        <position position="183"/>
    </location>
</feature>
<feature type="modified residue" description="S-nitrosocysteine" evidence="2">
    <location>
        <position position="156"/>
    </location>
</feature>
<feature type="modified residue" description="S-nitrosocysteine" evidence="2">
    <location>
        <position position="160"/>
    </location>
</feature>
<keyword id="KW-0963">Cytoplasm</keyword>
<keyword id="KW-0324">Glycolysis</keyword>
<keyword id="KW-0520">NAD</keyword>
<keyword id="KW-0560">Oxidoreductase</keyword>
<keyword id="KW-0702">S-nitrosylation</keyword>
<protein>
    <recommendedName>
        <fullName>Glyceraldehyde-3-phosphate dehydrogenase, cytosolic</fullName>
        <ecNumber>1.2.1.12</ecNumber>
    </recommendedName>
</protein>
<dbReference type="EC" id="1.2.1.12"/>
<dbReference type="EMBL" id="X04301">
    <property type="protein sequence ID" value="CAA27844.1"/>
    <property type="molecule type" value="mRNA"/>
</dbReference>
<dbReference type="PIR" id="A24796">
    <property type="entry name" value="DEIS3C"/>
</dbReference>
<dbReference type="SMR" id="P04796"/>
<dbReference type="UniPathway" id="UPA00109">
    <property type="reaction ID" value="UER00184"/>
</dbReference>
<dbReference type="GO" id="GO:0005829">
    <property type="term" value="C:cytosol"/>
    <property type="evidence" value="ECO:0007669"/>
    <property type="project" value="TreeGrafter"/>
</dbReference>
<dbReference type="GO" id="GO:0004365">
    <property type="term" value="F:glyceraldehyde-3-phosphate dehydrogenase (NAD+) (phosphorylating) activity"/>
    <property type="evidence" value="ECO:0007669"/>
    <property type="project" value="UniProtKB-EC"/>
</dbReference>
<dbReference type="GO" id="GO:0051287">
    <property type="term" value="F:NAD binding"/>
    <property type="evidence" value="ECO:0007669"/>
    <property type="project" value="InterPro"/>
</dbReference>
<dbReference type="GO" id="GO:0050661">
    <property type="term" value="F:NADP binding"/>
    <property type="evidence" value="ECO:0007669"/>
    <property type="project" value="InterPro"/>
</dbReference>
<dbReference type="GO" id="GO:0006006">
    <property type="term" value="P:glucose metabolic process"/>
    <property type="evidence" value="ECO:0007669"/>
    <property type="project" value="InterPro"/>
</dbReference>
<dbReference type="GO" id="GO:0006096">
    <property type="term" value="P:glycolytic process"/>
    <property type="evidence" value="ECO:0007669"/>
    <property type="project" value="UniProtKB-UniPathway"/>
</dbReference>
<dbReference type="CDD" id="cd18126">
    <property type="entry name" value="GAPDH_I_C"/>
    <property type="match status" value="1"/>
</dbReference>
<dbReference type="CDD" id="cd05214">
    <property type="entry name" value="GAPDH_I_N"/>
    <property type="match status" value="1"/>
</dbReference>
<dbReference type="FunFam" id="3.30.360.10:FF:000001">
    <property type="entry name" value="Glyceraldehyde-3-phosphate dehydrogenase"/>
    <property type="match status" value="1"/>
</dbReference>
<dbReference type="FunFam" id="3.40.50.720:FF:000020">
    <property type="entry name" value="Glyceraldehyde-3-phosphate dehydrogenase"/>
    <property type="match status" value="1"/>
</dbReference>
<dbReference type="Gene3D" id="3.30.360.10">
    <property type="entry name" value="Dihydrodipicolinate Reductase, domain 2"/>
    <property type="match status" value="1"/>
</dbReference>
<dbReference type="Gene3D" id="3.40.50.720">
    <property type="entry name" value="NAD(P)-binding Rossmann-like Domain"/>
    <property type="match status" value="1"/>
</dbReference>
<dbReference type="InterPro" id="IPR020831">
    <property type="entry name" value="GlycerAld/Erythrose_P_DH"/>
</dbReference>
<dbReference type="InterPro" id="IPR020830">
    <property type="entry name" value="GlycerAld_3-P_DH_AS"/>
</dbReference>
<dbReference type="InterPro" id="IPR020829">
    <property type="entry name" value="GlycerAld_3-P_DH_cat"/>
</dbReference>
<dbReference type="InterPro" id="IPR020828">
    <property type="entry name" value="GlycerAld_3-P_DH_NAD(P)-bd"/>
</dbReference>
<dbReference type="InterPro" id="IPR006424">
    <property type="entry name" value="Glyceraldehyde-3-P_DH_1"/>
</dbReference>
<dbReference type="InterPro" id="IPR036291">
    <property type="entry name" value="NAD(P)-bd_dom_sf"/>
</dbReference>
<dbReference type="NCBIfam" id="TIGR01534">
    <property type="entry name" value="GAPDH-I"/>
    <property type="match status" value="1"/>
</dbReference>
<dbReference type="PANTHER" id="PTHR10836">
    <property type="entry name" value="GLYCERALDEHYDE 3-PHOSPHATE DEHYDROGENASE"/>
    <property type="match status" value="1"/>
</dbReference>
<dbReference type="PANTHER" id="PTHR10836:SF112">
    <property type="entry name" value="GLYCERALDEHYDE-3-PHOSPHATE DEHYDROGENASE GAPC1, CYTOSOLIC-RELATED"/>
    <property type="match status" value="1"/>
</dbReference>
<dbReference type="Pfam" id="PF02800">
    <property type="entry name" value="Gp_dh_C"/>
    <property type="match status" value="1"/>
</dbReference>
<dbReference type="Pfam" id="PF00044">
    <property type="entry name" value="Gp_dh_N"/>
    <property type="match status" value="1"/>
</dbReference>
<dbReference type="PIRSF" id="PIRSF000149">
    <property type="entry name" value="GAP_DH"/>
    <property type="match status" value="1"/>
</dbReference>
<dbReference type="PRINTS" id="PR00078">
    <property type="entry name" value="G3PDHDRGNASE"/>
</dbReference>
<dbReference type="SMART" id="SM00846">
    <property type="entry name" value="Gp_dh_N"/>
    <property type="match status" value="1"/>
</dbReference>
<dbReference type="SUPFAM" id="SSF55347">
    <property type="entry name" value="Glyceraldehyde-3-phosphate dehydrogenase-like, C-terminal domain"/>
    <property type="match status" value="1"/>
</dbReference>
<dbReference type="SUPFAM" id="SSF51735">
    <property type="entry name" value="NAD(P)-binding Rossmann-fold domains"/>
    <property type="match status" value="1"/>
</dbReference>
<dbReference type="PROSITE" id="PS00071">
    <property type="entry name" value="GAPDH"/>
    <property type="match status" value="1"/>
</dbReference>
<sequence>MADKKIKIGINGFGRIGRLVARVILQRNDVELVAVNDPFITTEYMTYMFKYDSVHGQWKHNELKVKDEKTLLFGEKPVTVFGIRNPEDIPWGEAGADFVVESTGVFTDKDKAAAHLKGGAKKVVISAPSKDAPMFVVGVNEHEYKSDLNIVSNASCTTNCLAPLAKVINDRFGIVEGLMTTVHSITATQKTVDGPSMKDWRGGRAASFNIIPSSTGAAKAVGKVLPQLNGKLTGMSFRVPTVDVSVVDLTVRLEKAATYDEIKKAIKEESQGKLKGILGYTEDDVVSTDFVGDNRSSIFDAKAGIALSDNFVKLVSWYDNEWGYSTRVVDLIIHMSKA</sequence>
<proteinExistence type="evidence at transcript level"/>
<evidence type="ECO:0000250" key="1"/>
<evidence type="ECO:0000250" key="2">
    <source>
        <dbReference type="UniProtKB" id="Q9FX54"/>
    </source>
</evidence>
<evidence type="ECO:0000255" key="3">
    <source>
        <dbReference type="PROSITE-ProRule" id="PRU10009"/>
    </source>
</evidence>
<evidence type="ECO:0000305" key="4"/>
<name>G3PC_SINAL</name>
<reference key="1">
    <citation type="journal article" date="1986" name="Eur. J. Biochem.">
        <title>Prokaryotic features of a nucleus-encoded enzyme. cDNA sequences for chloroplast and cytosolic glyceraldehyde-3-phosphate dehydrogenases from mustard (Sinapis alba).</title>
        <authorList>
            <person name="Martin W.F."/>
            <person name="Cerff R."/>
        </authorList>
    </citation>
    <scope>NUCLEOTIDE SEQUENCE [MRNA]</scope>
</reference>
<gene>
    <name type="primary">GAPC</name>
</gene>
<comment type="function">
    <text evidence="1">Key enzyme in glycolysis that catalyzes the first step of the pathway by converting D-glyceraldehyde 3-phosphate (G3P) into 3-phospho-D-glyceroyl phosphate. Essential for the maintenance of cellular ATP levels and carbohydrate metabolism (By similarity).</text>
</comment>
<comment type="catalytic activity">
    <reaction evidence="3">
        <text>D-glyceraldehyde 3-phosphate + phosphate + NAD(+) = (2R)-3-phospho-glyceroyl phosphate + NADH + H(+)</text>
        <dbReference type="Rhea" id="RHEA:10300"/>
        <dbReference type="ChEBI" id="CHEBI:15378"/>
        <dbReference type="ChEBI" id="CHEBI:43474"/>
        <dbReference type="ChEBI" id="CHEBI:57540"/>
        <dbReference type="ChEBI" id="CHEBI:57604"/>
        <dbReference type="ChEBI" id="CHEBI:57945"/>
        <dbReference type="ChEBI" id="CHEBI:59776"/>
        <dbReference type="EC" id="1.2.1.12"/>
    </reaction>
</comment>
<comment type="pathway">
    <text>Carbohydrate degradation; glycolysis; pyruvate from D-glyceraldehyde 3-phosphate: step 1/5.</text>
</comment>
<comment type="subunit">
    <text evidence="1">Homotetramer.</text>
</comment>
<comment type="subcellular location">
    <subcellularLocation>
        <location evidence="1">Cytoplasm</location>
    </subcellularLocation>
</comment>
<comment type="miscellaneous">
    <text>Plants contain two types of GAPDH: cytosolic forms which participate in glycolysis and chloroplast forms which participate in photosynthesis. All the forms are encoded by distinct genes.</text>
</comment>
<comment type="similarity">
    <text evidence="4">Belongs to the glyceraldehyde-3-phosphate dehydrogenase family.</text>
</comment>